<name>RED1_COCH4</name>
<feature type="chain" id="PRO_0000437647" description="NADP-dependent oxidoreductase RED1">
    <location>
        <begin position="1"/>
        <end position="352"/>
    </location>
</feature>
<feature type="binding site" evidence="1">
    <location>
        <begin position="166"/>
        <end position="169"/>
    </location>
    <ligand>
        <name>NADP(+)</name>
        <dbReference type="ChEBI" id="CHEBI:58349"/>
    </ligand>
</feature>
<feature type="binding site" evidence="1">
    <location>
        <position position="192"/>
    </location>
    <ligand>
        <name>NADP(+)</name>
        <dbReference type="ChEBI" id="CHEBI:58349"/>
    </ligand>
</feature>
<feature type="binding site" evidence="1">
    <location>
        <position position="208"/>
    </location>
    <ligand>
        <name>NADP(+)</name>
        <dbReference type="ChEBI" id="CHEBI:58349"/>
    </ligand>
</feature>
<feature type="binding site" evidence="1">
    <location>
        <position position="231"/>
    </location>
    <ligand>
        <name>NADP(+)</name>
        <dbReference type="ChEBI" id="CHEBI:58349"/>
    </ligand>
</feature>
<feature type="binding site" evidence="1">
    <location>
        <begin position="285"/>
        <end position="287"/>
    </location>
    <ligand>
        <name>NADP(+)</name>
        <dbReference type="ChEBI" id="CHEBI:58349"/>
    </ligand>
</feature>
<feature type="sequence conflict" description="In Ref. 1; AAM88292." evidence="7" ref="1">
    <original>G</original>
    <variation>C</variation>
    <location>
        <position position="166"/>
    </location>
</feature>
<dbReference type="EC" id="1.-.-.-" evidence="8"/>
<dbReference type="EMBL" id="AF525909">
    <property type="protein sequence ID" value="AAM88292.1"/>
    <property type="molecule type" value="Genomic_DNA"/>
</dbReference>
<dbReference type="EMBL" id="KB733525">
    <property type="protein sequence ID" value="ENH98582.1"/>
    <property type="molecule type" value="Genomic_DNA"/>
</dbReference>
<dbReference type="RefSeq" id="XP_014072492.1">
    <property type="nucleotide sequence ID" value="XM_014217017.1"/>
</dbReference>
<dbReference type="SMR" id="N4WR35"/>
<dbReference type="GeneID" id="25845245"/>
<dbReference type="HOGENOM" id="CLU_026673_29_1_1"/>
<dbReference type="OrthoDB" id="809632at2759"/>
<dbReference type="PHI-base" id="PHI:2839"/>
<dbReference type="Proteomes" id="UP000012338">
    <property type="component" value="Unassembled WGS sequence"/>
</dbReference>
<dbReference type="GO" id="GO:0016628">
    <property type="term" value="F:oxidoreductase activity, acting on the CH-CH group of donors, NAD or NADP as acceptor"/>
    <property type="evidence" value="ECO:0007669"/>
    <property type="project" value="InterPro"/>
</dbReference>
<dbReference type="CDD" id="cd05288">
    <property type="entry name" value="PGDH"/>
    <property type="match status" value="1"/>
</dbReference>
<dbReference type="FunFam" id="3.40.50.720:FF:000121">
    <property type="entry name" value="Prostaglandin reductase 2"/>
    <property type="match status" value="1"/>
</dbReference>
<dbReference type="Gene3D" id="3.90.180.10">
    <property type="entry name" value="Medium-chain alcohol dehydrogenases, catalytic domain"/>
    <property type="match status" value="1"/>
</dbReference>
<dbReference type="Gene3D" id="3.40.50.720">
    <property type="entry name" value="NAD(P)-binding Rossmann-like Domain"/>
    <property type="match status" value="1"/>
</dbReference>
<dbReference type="InterPro" id="IPR013149">
    <property type="entry name" value="ADH-like_C"/>
</dbReference>
<dbReference type="InterPro" id="IPR041694">
    <property type="entry name" value="ADH_N_2"/>
</dbReference>
<dbReference type="InterPro" id="IPR011032">
    <property type="entry name" value="GroES-like_sf"/>
</dbReference>
<dbReference type="InterPro" id="IPR045010">
    <property type="entry name" value="MDR_fam"/>
</dbReference>
<dbReference type="InterPro" id="IPR036291">
    <property type="entry name" value="NAD(P)-bd_dom_sf"/>
</dbReference>
<dbReference type="InterPro" id="IPR020843">
    <property type="entry name" value="PKS_ER"/>
</dbReference>
<dbReference type="PANTHER" id="PTHR43205">
    <property type="entry name" value="PROSTAGLANDIN REDUCTASE"/>
    <property type="match status" value="1"/>
</dbReference>
<dbReference type="PANTHER" id="PTHR43205:SF7">
    <property type="entry name" value="PROSTAGLANDIN REDUCTASE 1"/>
    <property type="match status" value="1"/>
</dbReference>
<dbReference type="Pfam" id="PF16884">
    <property type="entry name" value="ADH_N_2"/>
    <property type="match status" value="1"/>
</dbReference>
<dbReference type="Pfam" id="PF00107">
    <property type="entry name" value="ADH_zinc_N"/>
    <property type="match status" value="1"/>
</dbReference>
<dbReference type="SMART" id="SM00829">
    <property type="entry name" value="PKS_ER"/>
    <property type="match status" value="1"/>
</dbReference>
<dbReference type="SUPFAM" id="SSF50129">
    <property type="entry name" value="GroES-like"/>
    <property type="match status" value="1"/>
</dbReference>
<dbReference type="SUPFAM" id="SSF51735">
    <property type="entry name" value="NAD(P)-binding Rossmann-fold domains"/>
    <property type="match status" value="1"/>
</dbReference>
<reference key="1">
    <citation type="journal article" date="2010" name="Mol. Plant Microbe Interact.">
        <title>Six new genes required for production of T-toxin, a polyketide determinant of high virulence of Cochliobolus heterostrophus to maize.</title>
        <authorList>
            <person name="Inderbitzin P."/>
            <person name="Asvarak T."/>
            <person name="Turgeon B.G."/>
        </authorList>
    </citation>
    <scope>NUCLEOTIDE SEQUENCE [GENOMIC DNA]</scope>
    <scope>FUNCTION</scope>
    <scope>DISRUPTION PHENOTYPE</scope>
    <source>
        <strain>C4 / ATCC 48331 / race T</strain>
    </source>
</reference>
<reference key="2">
    <citation type="journal article" date="2012" name="PLoS Pathog.">
        <title>Diverse lifestyles and strategies of plant pathogenesis encoded in the genomes of eighteen Dothideomycetes fungi.</title>
        <authorList>
            <person name="Ohm R.A."/>
            <person name="Feau N."/>
            <person name="Henrissat B."/>
            <person name="Schoch C.L."/>
            <person name="Horwitz B.A."/>
            <person name="Barry K.W."/>
            <person name="Condon B.J."/>
            <person name="Copeland A.C."/>
            <person name="Dhillon B."/>
            <person name="Glaser F."/>
            <person name="Hesse C.N."/>
            <person name="Kosti I."/>
            <person name="LaButti K."/>
            <person name="Lindquist E.A."/>
            <person name="Lucas S."/>
            <person name="Salamov A.A."/>
            <person name="Bradshaw R.E."/>
            <person name="Ciuffetti L."/>
            <person name="Hamelin R.C."/>
            <person name="Kema G.H.J."/>
            <person name="Lawrence C."/>
            <person name="Scott J.A."/>
            <person name="Spatafora J.W."/>
            <person name="Turgeon B.G."/>
            <person name="de Wit P.J.G.M."/>
            <person name="Zhong S."/>
            <person name="Goodwin S.B."/>
            <person name="Grigoriev I.V."/>
        </authorList>
    </citation>
    <scope>NUCLEOTIDE SEQUENCE [LARGE SCALE GENOMIC DNA]</scope>
    <source>
        <strain>C4 / ATCC 48331 / race T</strain>
    </source>
</reference>
<reference key="3">
    <citation type="journal article" date="2013" name="PLoS Genet.">
        <title>Comparative genome structure, secondary metabolite, and effector coding capacity across Cochliobolus pathogens.</title>
        <authorList>
            <person name="Condon B.J."/>
            <person name="Leng Y."/>
            <person name="Wu D."/>
            <person name="Bushley K.E."/>
            <person name="Ohm R.A."/>
            <person name="Otillar R."/>
            <person name="Martin J."/>
            <person name="Schackwitz W."/>
            <person name="Grimwood J."/>
            <person name="MohdZainudin N."/>
            <person name="Xue C."/>
            <person name="Wang R."/>
            <person name="Manning V.A."/>
            <person name="Dhillon B."/>
            <person name="Tu Z.J."/>
            <person name="Steffenson B.J."/>
            <person name="Salamov A."/>
            <person name="Sun H."/>
            <person name="Lowry S."/>
            <person name="LaButti K."/>
            <person name="Han J."/>
            <person name="Copeland A."/>
            <person name="Lindquist E."/>
            <person name="Barry K."/>
            <person name="Schmutz J."/>
            <person name="Baker S.E."/>
            <person name="Ciuffetti L.M."/>
            <person name="Grigoriev I.V."/>
            <person name="Zhong S."/>
            <person name="Turgeon B.G."/>
        </authorList>
    </citation>
    <scope>NUCLEOTIDE SEQUENCE [LARGE SCALE GENOMIC DNA]</scope>
    <source>
        <strain>C4 / ATCC 48331 / race T</strain>
    </source>
</reference>
<reference key="4">
    <citation type="journal article" date="1996" name="Plant Cell">
        <title>A polyketide synthase is required for fungal virulence and production of the polyketide T-toxin.</title>
        <authorList>
            <person name="Yang G."/>
            <person name="Rose M.S."/>
            <person name="Turgeon B.G."/>
            <person name="Yoder O.C."/>
        </authorList>
    </citation>
    <scope>FUNCTION</scope>
    <source>
        <strain>C4 / ATCC 48331 / race T</strain>
    </source>
</reference>
<reference key="5">
    <citation type="journal article" date="2002" name="Mol. Plant Microbe Interact.">
        <title>A decarboxylase encoded at the Cochliobolus heterostrophus translocation-associated Tox1B locus is required for polyketide (T-toxin) biosynthesis and high virulence on T-cytoplasm maize.</title>
        <authorList>
            <person name="Rose M.S."/>
            <person name="Yun S.-H."/>
            <person name="Asvarak T."/>
            <person name="Lu S.-W."/>
            <person name="Yoder O.C."/>
            <person name="Turgeon B.G."/>
        </authorList>
    </citation>
    <scope>FUNCTION</scope>
    <source>
        <strain>C4 / ATCC 48331 / race T</strain>
    </source>
</reference>
<reference key="6">
    <citation type="journal article" date="2006" name="Mol. Plant Microbe Interact.">
        <title>Two polyketide synthase-encoding genes are required for biosynthesis of the polyketide virulence factor, T-toxin, by Cochliobolus heterostrophus.</title>
        <authorList>
            <person name="Baker S.E."/>
            <person name="Kroken S."/>
            <person name="Inderbitzin P."/>
            <person name="Asvarak T."/>
            <person name="Li B.Y."/>
            <person name="Shi L."/>
            <person name="Yoder O.C."/>
            <person name="Turgeon B.G."/>
        </authorList>
    </citation>
    <scope>FUNCTION</scope>
</reference>
<keyword id="KW-0521">NADP</keyword>
<keyword id="KW-0560">Oxidoreductase</keyword>
<proteinExistence type="inferred from homology"/>
<gene>
    <name evidence="6" type="primary">RED1</name>
    <name type="ORF">COCC4DRAFT_45938</name>
</gene>
<accession>N4WR35</accession>
<accession>Q8NJQ2</accession>
<organism>
    <name type="scientific">Cochliobolus heterostrophus (strain C4 / ATCC 48331 / race T)</name>
    <name type="common">Southern corn leaf blight fungus</name>
    <name type="synonym">Bipolaris maydis</name>
    <dbReference type="NCBI Taxonomy" id="665024"/>
    <lineage>
        <taxon>Eukaryota</taxon>
        <taxon>Fungi</taxon>
        <taxon>Dikarya</taxon>
        <taxon>Ascomycota</taxon>
        <taxon>Pezizomycotina</taxon>
        <taxon>Dothideomycetes</taxon>
        <taxon>Pleosporomycetidae</taxon>
        <taxon>Pleosporales</taxon>
        <taxon>Pleosporineae</taxon>
        <taxon>Pleosporaceae</taxon>
        <taxon>Bipolaris</taxon>
    </lineage>
</organism>
<sequence length="352" mass="38473">MYQNKSLIFKNPPIGWPKPDVDFGVECRPIDINGDIPLGGVILKNCYVSLDPYQRGRMRAPTVDSYSPPFTIGDPMEGHVISRVIRSASTKLQPGDFVSGVGPIQEFSVLSAGVVDGFTRIENPYNLNLEIFLGPLGMPGLTAYSSFYEIGKPKKGETIFISAASGAVGQLVGQLAKREGLYVIGSVGDDEKVEFITKGLGFDVGFNYKKEVIGEALMRVAPEGIDIYFDNVGGQTLESALYAMRPRGRIVVSGMISQYNLQPSELYGVKNLFMVITNRITIQGFIVTDSDMGPKYSAEHLKNVSQWIYDGSLKPKIHVDTGMDHACQSFINMLKGRKIGKAVLQIADLNGD</sequence>
<protein>
    <recommendedName>
        <fullName evidence="7">NADP-dependent oxidoreductase RED1</fullName>
        <ecNumber evidence="8">1.-.-.-</ecNumber>
    </recommendedName>
    <alternativeName>
        <fullName evidence="7">T-toxin biosynthesis protein RED1</fullName>
    </alternativeName>
</protein>
<comment type="function">
    <text evidence="2 3 4 5">NADP-dependent oxidoreductase; part of the Tox1B locus, one of the 2 loci that mediate the biosynthesis of T-toxin, a family of linear polyketides 37 to 45 carbons in length, of which the major component is 41 carbons, and which leads to high virulence to maize (PubMed:20192833, PubMed:8953776). One of the PKSs (PKS1 or PKS2) could synthesize a precursor, used subsequently by the other PKS as starter unit, to add additional carbons (PubMed:16529376). Variability in the length of the final carbon backbone C35-47 could be achieved by varying the number of condensation cycles, or use of different starter or extender units or might be due to decarboxylation of the penultimate product, catalyzed by DEC1 (PubMed:12236595). Additional proteins are required for the biosynthesis of T-toxin, including oxidoreductases RED1, RED2, RED3, LAM1 and OXI1, as well as esterase TOX9 (PubMed:20192833).</text>
</comment>
<comment type="pathway">
    <text evidence="4">Mycotoxin biosynthesis.</text>
</comment>
<comment type="disruption phenotype">
    <text evidence="4">Significantly reduces the production of T-toxin and decreases the virulence to maize (PubMed:20192833).</text>
</comment>
<comment type="similarity">
    <text evidence="7">Belongs to the NADP-dependent oxidoreductase L4BD family.</text>
</comment>
<evidence type="ECO:0000250" key="1">
    <source>
        <dbReference type="UniProtKB" id="Q9EQZ5"/>
    </source>
</evidence>
<evidence type="ECO:0000269" key="2">
    <source>
    </source>
</evidence>
<evidence type="ECO:0000269" key="3">
    <source>
    </source>
</evidence>
<evidence type="ECO:0000269" key="4">
    <source>
    </source>
</evidence>
<evidence type="ECO:0000269" key="5">
    <source>
    </source>
</evidence>
<evidence type="ECO:0000303" key="6">
    <source>
    </source>
</evidence>
<evidence type="ECO:0000305" key="7"/>
<evidence type="ECO:0000305" key="8">
    <source>
    </source>
</evidence>